<comment type="function">
    <text evidence="1 3">Component of the acetyl coenzyme A carboxylase (ACC) complex. First, biotin carboxylase catalyzes the carboxylation of biotin on its carrier protein (BCCP) and then the CO(2) group is transferred by the carboxyltransferase to acetyl-CoA to form malonyl-CoA.</text>
</comment>
<comment type="catalytic activity">
    <reaction evidence="1 3">
        <text>N(6)-carboxybiotinyl-L-lysyl-[protein] + acetyl-CoA = N(6)-biotinyl-L-lysyl-[protein] + malonyl-CoA</text>
        <dbReference type="Rhea" id="RHEA:54728"/>
        <dbReference type="Rhea" id="RHEA-COMP:10505"/>
        <dbReference type="Rhea" id="RHEA-COMP:10506"/>
        <dbReference type="ChEBI" id="CHEBI:57288"/>
        <dbReference type="ChEBI" id="CHEBI:57384"/>
        <dbReference type="ChEBI" id="CHEBI:83144"/>
        <dbReference type="ChEBI" id="CHEBI:83145"/>
        <dbReference type="EC" id="2.1.3.15"/>
    </reaction>
</comment>
<comment type="activity regulation">
    <text evidence="3">Competitively inhibited by pyrrolidine dione antibiotic moiramide B (CPD1).</text>
</comment>
<comment type="biophysicochemical properties">
    <kinetics>
        <KM evidence="3">100 uM for malonyl-CoA</KM>
        <KM evidence="3">10 mM for biocytin</KM>
    </kinetics>
</comment>
<comment type="pathway">
    <text evidence="1">Lipid metabolism; malonyl-CoA biosynthesis; malonyl-CoA from acetyl-CoA: step 1/1.</text>
</comment>
<comment type="subunit">
    <text>Acetyl-CoA carboxylase is a heterohexamer composed of biotin carboxyl carrier protein (AccB), biotin carboxylase (AccC) and two subunits each of ACCase subunit alpha (AccA) and ACCase subunit beta (AccD).</text>
</comment>
<comment type="interaction">
    <interactant intactId="EBI-542031">
        <id>P0ABD5</id>
    </interactant>
    <interactant intactId="EBI-542031">
        <id>P0ABD5</id>
        <label>accA</label>
    </interactant>
    <organismsDiffer>false</organismsDiffer>
    <experiments>2</experiments>
</comment>
<comment type="interaction">
    <interactant intactId="EBI-542031">
        <id>P0ABD5</id>
    </interactant>
    <interactant intactId="EBI-542064">
        <id>P0A9Q5</id>
        <label>accD</label>
    </interactant>
    <organismsDiffer>false</organismsDiffer>
    <experiments>17</experiments>
</comment>
<comment type="subcellular location">
    <subcellularLocation>
        <location>Cytoplasm</location>
    </subcellularLocation>
</comment>
<comment type="similarity">
    <text evidence="1">Belongs to the AccA family.</text>
</comment>
<proteinExistence type="evidence at protein level"/>
<name>ACCA_ECOLI</name>
<organism>
    <name type="scientific">Escherichia coli (strain K12)</name>
    <dbReference type="NCBI Taxonomy" id="83333"/>
    <lineage>
        <taxon>Bacteria</taxon>
        <taxon>Pseudomonadati</taxon>
        <taxon>Pseudomonadota</taxon>
        <taxon>Gammaproteobacteria</taxon>
        <taxon>Enterobacterales</taxon>
        <taxon>Enterobacteriaceae</taxon>
        <taxon>Escherichia</taxon>
    </lineage>
</organism>
<reference key="1">
    <citation type="journal article" date="1992" name="J. Biol. Chem.">
        <title>The genes encoding the two carboxyltransferase subunits of Escherichia coli acetyl-CoA carboxylase.</title>
        <authorList>
            <person name="Li S.-J."/>
            <person name="Cronan J.E. Jr."/>
        </authorList>
    </citation>
    <scope>NUCLEOTIDE SEQUENCE [GENOMIC DNA]</scope>
    <scope>PARTIAL PROTEIN SEQUENCE</scope>
    <source>
        <strain>K12 / W3110 / ATCC 27325 / DSM 5911</strain>
    </source>
</reference>
<reference key="2">
    <citation type="journal article" date="1997" name="Genes Genet. Syst.">
        <title>The Escherichia coli ldcC gene encodes another lysine decarboxylase, probably a constitutive enzyme.</title>
        <authorList>
            <person name="Yamamoto Y."/>
            <person name="Miwa Y."/>
            <person name="Miyoshi K."/>
            <person name="Furuyama J."/>
            <person name="Ohmori H."/>
        </authorList>
    </citation>
    <scope>NUCLEOTIDE SEQUENCE [GENOMIC DNA]</scope>
    <source>
        <strain>K12 / W3110 / ATCC 27325 / DSM 5911</strain>
    </source>
</reference>
<reference key="3">
    <citation type="submission" date="1996-02" db="EMBL/GenBank/DDBJ databases">
        <title>Systematic sequencing of the Escherichia coli genome: analysis of the 4.0 - 6.0 min (189,987 - 281,416bp) region.</title>
        <authorList>
            <person name="Takemoto K."/>
            <person name="Mori H."/>
            <person name="Murayama N."/>
            <person name="Kataoka K."/>
            <person name="Yano M."/>
            <person name="Itoh T."/>
            <person name="Yamamoto Y."/>
            <person name="Inokuchi H."/>
            <person name="Miki T."/>
            <person name="Hatada E."/>
            <person name="Fukuda R."/>
            <person name="Ichihara S."/>
            <person name="Mizuno T."/>
            <person name="Makino K."/>
            <person name="Nakata A."/>
            <person name="Yura T."/>
            <person name="Sampei G."/>
            <person name="Mizobuchi K."/>
        </authorList>
    </citation>
    <scope>NUCLEOTIDE SEQUENCE [LARGE SCALE GENOMIC DNA]</scope>
    <source>
        <strain>K12 / W3110 / ATCC 27325 / DSM 5911</strain>
    </source>
</reference>
<reference key="4">
    <citation type="submission" date="1997-01" db="EMBL/GenBank/DDBJ databases">
        <title>Sequence of minutes 4-25 of Escherichia coli.</title>
        <authorList>
            <person name="Chung E."/>
            <person name="Allen E."/>
            <person name="Araujo R."/>
            <person name="Aparicio A.M."/>
            <person name="Davis K."/>
            <person name="Duncan M."/>
            <person name="Federspiel N."/>
            <person name="Hyman R."/>
            <person name="Kalman S."/>
            <person name="Komp C."/>
            <person name="Kurdi O."/>
            <person name="Lew H."/>
            <person name="Lin D."/>
            <person name="Namath A."/>
            <person name="Oefner P."/>
            <person name="Roberts D."/>
            <person name="Schramm S."/>
            <person name="Davis R.W."/>
        </authorList>
    </citation>
    <scope>NUCLEOTIDE SEQUENCE [LARGE SCALE GENOMIC DNA]</scope>
    <source>
        <strain>K12 / MG1655 / ATCC 47076</strain>
    </source>
</reference>
<reference key="5">
    <citation type="journal article" date="1997" name="Science">
        <title>The complete genome sequence of Escherichia coli K-12.</title>
        <authorList>
            <person name="Blattner F.R."/>
            <person name="Plunkett G. III"/>
            <person name="Bloch C.A."/>
            <person name="Perna N.T."/>
            <person name="Burland V."/>
            <person name="Riley M."/>
            <person name="Collado-Vides J."/>
            <person name="Glasner J.D."/>
            <person name="Rode C.K."/>
            <person name="Mayhew G.F."/>
            <person name="Gregor J."/>
            <person name="Davis N.W."/>
            <person name="Kirkpatrick H.A."/>
            <person name="Goeden M.A."/>
            <person name="Rose D.J."/>
            <person name="Mau B."/>
            <person name="Shao Y."/>
        </authorList>
    </citation>
    <scope>NUCLEOTIDE SEQUENCE [LARGE SCALE GENOMIC DNA]</scope>
    <source>
        <strain>K12 / MG1655 / ATCC 47076</strain>
    </source>
</reference>
<reference key="6">
    <citation type="journal article" date="2006" name="Mol. Syst. Biol.">
        <title>Highly accurate genome sequences of Escherichia coli K-12 strains MG1655 and W3110.</title>
        <authorList>
            <person name="Hayashi K."/>
            <person name="Morooka N."/>
            <person name="Yamamoto Y."/>
            <person name="Fujita K."/>
            <person name="Isono K."/>
            <person name="Choi S."/>
            <person name="Ohtsubo E."/>
            <person name="Baba T."/>
            <person name="Wanner B.L."/>
            <person name="Mori H."/>
            <person name="Horiuchi T."/>
        </authorList>
    </citation>
    <scope>NUCLEOTIDE SEQUENCE [LARGE SCALE GENOMIC DNA]</scope>
    <scope>SEQUENCE REVISION TO 24</scope>
    <source>
        <strain>K12 / W3110 / ATCC 27325 / DSM 5911</strain>
    </source>
</reference>
<reference key="7">
    <citation type="journal article" date="1997" name="J. Bacteriol.">
        <title>Characterization of a second lysine decarboxylase isolated from Escherichia coli.</title>
        <authorList>
            <person name="Kikuchi Y."/>
            <person name="Kojima H."/>
            <person name="Tanaka T."/>
            <person name="Takatsuka Y."/>
            <person name="Kamio Y."/>
        </authorList>
    </citation>
    <scope>NUCLEOTIDE SEQUENCE [GENOMIC DNA] OF 164-319</scope>
    <source>
        <strain>K12 / W3110 / ATCC 27325 / DSM 5911</strain>
    </source>
</reference>
<reference key="8">
    <citation type="journal article" date="1987" name="J. Bacteriol.">
        <title>Sequence analysis of the Escherichia coli dnaE gene.</title>
        <authorList>
            <person name="Tomasiewicz H.G."/>
            <person name="McHenry C.S."/>
        </authorList>
    </citation>
    <scope>NUCLEOTIDE SEQUENCE [GENOMIC DNA] OF 1-20</scope>
</reference>
<reference key="9">
    <citation type="journal article" date="1997" name="Electrophoresis">
        <title>Comparing the predicted and observed properties of proteins encoded in the genome of Escherichia coli K-12.</title>
        <authorList>
            <person name="Link A.J."/>
            <person name="Robison K."/>
            <person name="Church G.M."/>
        </authorList>
    </citation>
    <scope>PROTEIN SEQUENCE OF 2-13</scope>
    <source>
        <strain>K12 / EMG2</strain>
    </source>
</reference>
<reference key="10">
    <citation type="journal article" date="2004" name="J. Biol. Chem.">
        <title>Identification and characterization of the first class of potent bacterial acetyl-CoA carboxylase inhibitors with antibacterial activity.</title>
        <authorList>
            <person name="Freiberg C."/>
            <person name="Brunner N.A."/>
            <person name="Schiffer G."/>
            <person name="Lampe T."/>
            <person name="Pohlmann J."/>
            <person name="Brands M."/>
            <person name="Raabe M."/>
            <person name="Haebich D."/>
            <person name="Ziegelbauer K."/>
        </authorList>
    </citation>
    <scope>FUNCTION</scope>
    <scope>CATALYTIC ACTIVITY</scope>
    <scope>BIOPHYSICOCHEMICAL PROPERTIES</scope>
    <scope>ACTIVITY REGULATION</scope>
</reference>
<reference key="11">
    <citation type="journal article" date="2006" name="Biochemistry">
        <title>The structure of the carboxyltransferase component of acetyl-coA carboxylase reveals a zinc-binding motif unique to the bacterial enzyme.</title>
        <authorList>
            <person name="Bilder P."/>
            <person name="Lightle S."/>
            <person name="Bainbridge G."/>
            <person name="Ohren J."/>
            <person name="Finzel B."/>
            <person name="Sun F."/>
            <person name="Holley S."/>
            <person name="Al-Kassim L."/>
            <person name="Spessard C."/>
            <person name="Melnick M."/>
            <person name="Newcomer M."/>
            <person name="Waldrop G.L."/>
        </authorList>
    </citation>
    <scope>X-RAY CRYSTALLOGRAPHY (3.2 ANGSTROMS)</scope>
</reference>
<feature type="initiator methionine" description="Removed" evidence="4">
    <location>
        <position position="1"/>
    </location>
</feature>
<feature type="chain" id="PRO_0000146774" description="Acetyl-coenzyme A carboxylase carboxyl transferase subunit alpha">
    <location>
        <begin position="2"/>
        <end position="319"/>
    </location>
</feature>
<feature type="domain" description="CoA carboxyltransferase C-terminal" evidence="2">
    <location>
        <begin position="35"/>
        <end position="296"/>
    </location>
</feature>
<feature type="helix" evidence="5">
    <location>
        <begin position="7"/>
        <end position="9"/>
    </location>
</feature>
<feature type="helix" evidence="5">
    <location>
        <begin position="10"/>
        <end position="26"/>
    </location>
</feature>
<feature type="helix" evidence="5">
    <location>
        <begin position="33"/>
        <end position="54"/>
    </location>
</feature>
<feature type="helix" evidence="5">
    <location>
        <begin position="60"/>
        <end position="67"/>
    </location>
</feature>
<feature type="helix" evidence="5">
    <location>
        <begin position="75"/>
        <end position="82"/>
    </location>
</feature>
<feature type="strand" evidence="5">
    <location>
        <begin position="84"/>
        <end position="88"/>
    </location>
</feature>
<feature type="strand" evidence="5">
    <location>
        <begin position="93"/>
        <end position="95"/>
    </location>
</feature>
<feature type="strand" evidence="5">
    <location>
        <begin position="101"/>
        <end position="108"/>
    </location>
</feature>
<feature type="strand" evidence="5">
    <location>
        <begin position="111"/>
        <end position="118"/>
    </location>
</feature>
<feature type="helix" evidence="5">
    <location>
        <begin position="124"/>
        <end position="129"/>
    </location>
</feature>
<feature type="helix" evidence="5">
    <location>
        <begin position="131"/>
        <end position="133"/>
    </location>
</feature>
<feature type="helix" evidence="5">
    <location>
        <begin position="137"/>
        <end position="152"/>
    </location>
</feature>
<feature type="strand" evidence="5">
    <location>
        <begin position="157"/>
        <end position="160"/>
    </location>
</feature>
<feature type="helix" evidence="5">
    <location>
        <begin position="170"/>
        <end position="174"/>
    </location>
</feature>
<feature type="helix" evidence="5">
    <location>
        <begin position="177"/>
        <end position="188"/>
    </location>
</feature>
<feature type="strand" evidence="5">
    <location>
        <begin position="195"/>
        <end position="198"/>
    </location>
</feature>
<feature type="strand" evidence="5">
    <location>
        <begin position="201"/>
        <end position="204"/>
    </location>
</feature>
<feature type="helix" evidence="5">
    <location>
        <begin position="209"/>
        <end position="211"/>
    </location>
</feature>
<feature type="strand" evidence="5">
    <location>
        <begin position="215"/>
        <end position="220"/>
    </location>
</feature>
<feature type="strand" evidence="5">
    <location>
        <begin position="224"/>
        <end position="228"/>
    </location>
</feature>
<feature type="helix" evidence="5">
    <location>
        <begin position="230"/>
        <end position="237"/>
    </location>
</feature>
<feature type="helix" evidence="5">
    <location>
        <begin position="244"/>
        <end position="251"/>
    </location>
</feature>
<feature type="helix" evidence="5">
    <location>
        <begin position="255"/>
        <end position="259"/>
    </location>
</feature>
<feature type="turn" evidence="5">
    <location>
        <begin position="260"/>
        <end position="262"/>
    </location>
</feature>
<feature type="strand" evidence="5">
    <location>
        <begin position="265"/>
        <end position="268"/>
    </location>
</feature>
<feature type="turn" evidence="5">
    <location>
        <begin position="275"/>
        <end position="277"/>
    </location>
</feature>
<feature type="helix" evidence="5">
    <location>
        <begin position="279"/>
        <end position="295"/>
    </location>
</feature>
<feature type="strand" evidence="5">
    <location>
        <begin position="298"/>
        <end position="300"/>
    </location>
</feature>
<feature type="helix" evidence="5">
    <location>
        <begin position="302"/>
        <end position="314"/>
    </location>
</feature>
<dbReference type="EC" id="2.1.3.15" evidence="1 3"/>
<dbReference type="EMBL" id="M96394">
    <property type="protein sequence ID" value="AAA70370.1"/>
    <property type="molecule type" value="Genomic_DNA"/>
</dbReference>
<dbReference type="EMBL" id="D49445">
    <property type="protein sequence ID" value="BAA08425.1"/>
    <property type="molecule type" value="Genomic_DNA"/>
</dbReference>
<dbReference type="EMBL" id="U70214">
    <property type="protein sequence ID" value="AAB08614.1"/>
    <property type="molecule type" value="Genomic_DNA"/>
</dbReference>
<dbReference type="EMBL" id="U00096">
    <property type="protein sequence ID" value="AAC73296.1"/>
    <property type="molecule type" value="Genomic_DNA"/>
</dbReference>
<dbReference type="EMBL" id="AP009048">
    <property type="protein sequence ID" value="BAA77860.2"/>
    <property type="molecule type" value="Genomic_DNA"/>
</dbReference>
<dbReference type="EMBL" id="D87518">
    <property type="protein sequence ID" value="BAA21655.1"/>
    <property type="molecule type" value="Genomic_DNA"/>
</dbReference>
<dbReference type="EMBL" id="M19334">
    <property type="status" value="NOT_ANNOTATED_CDS"/>
    <property type="molecule type" value="Genomic_DNA"/>
</dbReference>
<dbReference type="PIR" id="A43452">
    <property type="entry name" value="A43452"/>
</dbReference>
<dbReference type="RefSeq" id="NP_414727.1">
    <property type="nucleotide sequence ID" value="NC_000913.3"/>
</dbReference>
<dbReference type="RefSeq" id="WP_000055741.1">
    <property type="nucleotide sequence ID" value="NZ_STEB01000032.1"/>
</dbReference>
<dbReference type="PDB" id="2F9Y">
    <property type="method" value="X-ray"/>
    <property type="resolution" value="3.20 A"/>
    <property type="chains" value="A=1-319"/>
</dbReference>
<dbReference type="PDB" id="8UZ2">
    <property type="method" value="EM"/>
    <property type="resolution" value="3.18 A"/>
    <property type="chains" value="A/E=4-319"/>
</dbReference>
<dbReference type="PDBsum" id="2F9Y"/>
<dbReference type="PDBsum" id="8UZ2"/>
<dbReference type="EMDB" id="EMD-42831"/>
<dbReference type="SMR" id="P0ABD5"/>
<dbReference type="BioGRID" id="4259753">
    <property type="interactions" value="217"/>
</dbReference>
<dbReference type="BioGRID" id="849295">
    <property type="interactions" value="5"/>
</dbReference>
<dbReference type="ComplexPortal" id="CPX-3206">
    <property type="entry name" value="Acetyl-CoA carboxylase complex"/>
</dbReference>
<dbReference type="DIP" id="DIP-35897N"/>
<dbReference type="FunCoup" id="P0ABD5">
    <property type="interactions" value="775"/>
</dbReference>
<dbReference type="IntAct" id="P0ABD5">
    <property type="interactions" value="32"/>
</dbReference>
<dbReference type="MINT" id="P0ABD5"/>
<dbReference type="STRING" id="511145.b0185"/>
<dbReference type="jPOST" id="P0ABD5"/>
<dbReference type="PaxDb" id="511145-b0185"/>
<dbReference type="EnsemblBacteria" id="AAC73296">
    <property type="protein sequence ID" value="AAC73296"/>
    <property type="gene ID" value="b0185"/>
</dbReference>
<dbReference type="GeneID" id="86945115"/>
<dbReference type="GeneID" id="944895"/>
<dbReference type="KEGG" id="ecj:JW0180"/>
<dbReference type="KEGG" id="eco:b0185"/>
<dbReference type="KEGG" id="ecoc:C3026_00850"/>
<dbReference type="PATRIC" id="fig|1411691.4.peg.2094"/>
<dbReference type="EchoBASE" id="EB1600"/>
<dbReference type="eggNOG" id="COG0825">
    <property type="taxonomic scope" value="Bacteria"/>
</dbReference>
<dbReference type="HOGENOM" id="CLU_015486_0_2_6"/>
<dbReference type="InParanoid" id="P0ABD5"/>
<dbReference type="OMA" id="RNFGMAN"/>
<dbReference type="OrthoDB" id="9808023at2"/>
<dbReference type="PhylomeDB" id="P0ABD5"/>
<dbReference type="BioCyc" id="EcoCyc:CARBOXYL-TRANSFERASE-ALPHA-MONOMER"/>
<dbReference type="BioCyc" id="MetaCyc:CARBOXYL-TRANSFERASE-ALPHA-MONOMER"/>
<dbReference type="BRENDA" id="2.1.3.15">
    <property type="organism ID" value="2026"/>
</dbReference>
<dbReference type="BRENDA" id="2.3.2.31">
    <property type="organism ID" value="2681"/>
</dbReference>
<dbReference type="BRENDA" id="6.4.1.2">
    <property type="organism ID" value="2026"/>
</dbReference>
<dbReference type="SABIO-RK" id="P0ABD5"/>
<dbReference type="UniPathway" id="UPA00655">
    <property type="reaction ID" value="UER00711"/>
</dbReference>
<dbReference type="EvolutionaryTrace" id="P0ABD5"/>
<dbReference type="PRO" id="PR:P0ABD5"/>
<dbReference type="Proteomes" id="UP000000625">
    <property type="component" value="Chromosome"/>
</dbReference>
<dbReference type="GO" id="GO:0009329">
    <property type="term" value="C:acetate CoA-transferase complex"/>
    <property type="evidence" value="ECO:0000314"/>
    <property type="project" value="EcoCyc"/>
</dbReference>
<dbReference type="GO" id="GO:0009317">
    <property type="term" value="C:acetyl-CoA carboxylase complex"/>
    <property type="evidence" value="ECO:0000314"/>
    <property type="project" value="ComplexPortal"/>
</dbReference>
<dbReference type="GO" id="GO:0005737">
    <property type="term" value="C:cytoplasm"/>
    <property type="evidence" value="ECO:0000305"/>
    <property type="project" value="EcoliWiki"/>
</dbReference>
<dbReference type="GO" id="GO:0005829">
    <property type="term" value="C:cytosol"/>
    <property type="evidence" value="ECO:0000314"/>
    <property type="project" value="EcoCyc"/>
</dbReference>
<dbReference type="GO" id="GO:0003989">
    <property type="term" value="F:acetyl-CoA carboxylase activity"/>
    <property type="evidence" value="ECO:0007669"/>
    <property type="project" value="InterPro"/>
</dbReference>
<dbReference type="GO" id="GO:0005524">
    <property type="term" value="F:ATP binding"/>
    <property type="evidence" value="ECO:0007669"/>
    <property type="project" value="UniProtKB-KW"/>
</dbReference>
<dbReference type="GO" id="GO:0016743">
    <property type="term" value="F:carboxyl- or carbamoyltransferase activity"/>
    <property type="evidence" value="ECO:0007669"/>
    <property type="project" value="UniProtKB-UniRule"/>
</dbReference>
<dbReference type="GO" id="GO:0042802">
    <property type="term" value="F:identical protein binding"/>
    <property type="evidence" value="ECO:0000353"/>
    <property type="project" value="IntAct"/>
</dbReference>
<dbReference type="GO" id="GO:0006633">
    <property type="term" value="P:fatty acid biosynthetic process"/>
    <property type="evidence" value="ECO:0000314"/>
    <property type="project" value="ComplexPortal"/>
</dbReference>
<dbReference type="GO" id="GO:0042759">
    <property type="term" value="P:long-chain fatty acid biosynthetic process"/>
    <property type="evidence" value="ECO:0000303"/>
    <property type="project" value="EcoliWiki"/>
</dbReference>
<dbReference type="GO" id="GO:2001295">
    <property type="term" value="P:malonyl-CoA biosynthetic process"/>
    <property type="evidence" value="ECO:0000314"/>
    <property type="project" value="ComplexPortal"/>
</dbReference>
<dbReference type="FunFam" id="3.90.226.10:FF:000008">
    <property type="entry name" value="Acetyl-coenzyme A carboxylase carboxyl transferase subunit alpha"/>
    <property type="match status" value="1"/>
</dbReference>
<dbReference type="Gene3D" id="3.90.226.10">
    <property type="entry name" value="2-enoyl-CoA Hydratase, Chain A, domain 1"/>
    <property type="match status" value="1"/>
</dbReference>
<dbReference type="HAMAP" id="MF_00823">
    <property type="entry name" value="AcetylCoA_CT_alpha"/>
    <property type="match status" value="1"/>
</dbReference>
<dbReference type="InterPro" id="IPR001095">
    <property type="entry name" value="Acetyl_CoA_COase_a_su"/>
</dbReference>
<dbReference type="InterPro" id="IPR029045">
    <property type="entry name" value="ClpP/crotonase-like_dom_sf"/>
</dbReference>
<dbReference type="InterPro" id="IPR011763">
    <property type="entry name" value="COA_CT_C"/>
</dbReference>
<dbReference type="NCBIfam" id="TIGR00513">
    <property type="entry name" value="accA"/>
    <property type="match status" value="1"/>
</dbReference>
<dbReference type="NCBIfam" id="NF041504">
    <property type="entry name" value="AccA_sub"/>
    <property type="match status" value="1"/>
</dbReference>
<dbReference type="NCBIfam" id="NF004344">
    <property type="entry name" value="PRK05724.1"/>
    <property type="match status" value="1"/>
</dbReference>
<dbReference type="PANTHER" id="PTHR42853">
    <property type="entry name" value="ACETYL-COENZYME A CARBOXYLASE CARBOXYL TRANSFERASE SUBUNIT ALPHA"/>
    <property type="match status" value="1"/>
</dbReference>
<dbReference type="PANTHER" id="PTHR42853:SF3">
    <property type="entry name" value="ACETYL-COENZYME A CARBOXYLASE CARBOXYL TRANSFERASE SUBUNIT ALPHA, CHLOROPLASTIC"/>
    <property type="match status" value="1"/>
</dbReference>
<dbReference type="Pfam" id="PF03255">
    <property type="entry name" value="ACCA"/>
    <property type="match status" value="1"/>
</dbReference>
<dbReference type="PRINTS" id="PR01069">
    <property type="entry name" value="ACCCTRFRASEA"/>
</dbReference>
<dbReference type="SUPFAM" id="SSF52096">
    <property type="entry name" value="ClpP/crotonase"/>
    <property type="match status" value="1"/>
</dbReference>
<dbReference type="PROSITE" id="PS50989">
    <property type="entry name" value="COA_CT_CTER"/>
    <property type="match status" value="1"/>
</dbReference>
<keyword id="KW-0002">3D-structure</keyword>
<keyword id="KW-0067">ATP-binding</keyword>
<keyword id="KW-0963">Cytoplasm</keyword>
<keyword id="KW-0903">Direct protein sequencing</keyword>
<keyword id="KW-0275">Fatty acid biosynthesis</keyword>
<keyword id="KW-0276">Fatty acid metabolism</keyword>
<keyword id="KW-0444">Lipid biosynthesis</keyword>
<keyword id="KW-0443">Lipid metabolism</keyword>
<keyword id="KW-0547">Nucleotide-binding</keyword>
<keyword id="KW-1185">Reference proteome</keyword>
<keyword id="KW-0808">Transferase</keyword>
<gene>
    <name evidence="1" type="primary">accA</name>
    <name type="ordered locus">b0185</name>
    <name type="ordered locus">JW0180</name>
</gene>
<evidence type="ECO:0000255" key="1">
    <source>
        <dbReference type="HAMAP-Rule" id="MF_00823"/>
    </source>
</evidence>
<evidence type="ECO:0000255" key="2">
    <source>
        <dbReference type="PROSITE-ProRule" id="PRU01137"/>
    </source>
</evidence>
<evidence type="ECO:0000269" key="3">
    <source>
    </source>
</evidence>
<evidence type="ECO:0000269" key="4">
    <source>
    </source>
</evidence>
<evidence type="ECO:0007829" key="5">
    <source>
        <dbReference type="PDB" id="8UZ2"/>
    </source>
</evidence>
<protein>
    <recommendedName>
        <fullName evidence="1">Acetyl-coenzyme A carboxylase carboxyl transferase subunit alpha</fullName>
        <shortName evidence="1">ACCase subunit alpha</shortName>
        <shortName evidence="1">Acetyl-CoA carboxylase carboxyltransferase subunit alpha</shortName>
        <ecNumber evidence="1 3">2.1.3.15</ecNumber>
    </recommendedName>
</protein>
<accession>P0ABD5</accession>
<accession>P30867</accession>
<sequence>MSLNFLDFEQPIAELEAKIDSLTAVSRQDEKLDINIDEEVHRLREKSVELTRKIFADLGAWQIAQLARHPQRPYTLDYVRLAFDEFDELAGDRAYADDKAIVGGIARLDGRPVMIIGHQKGRETKEKIRRNFGMPAPEGYRKALRLMQMAERFKMPIITFIDTPGAYPGVGAEERGQSEAIARNLREMSRLGVPVVCTVIGEGGSGGALAIGVGDKVNMLQYSTYSVISPEGCASILWKSADKAPLAAEAMGIIAPRLKELKLIDSIIPEPLGGAHRNPEAMAASLKAQLLADLADLDVLSTEDLKNRRYQRLMSYGYA</sequence>